<sequence>MLNTLYSGNRLRVDFSKTPQQIEVPNLLQLQQSSYNKFLMLEEKDRSQSGVETVFQSVFPIHDTQNRLTVEYIDSEVGKPKYTVRECMERGLTYAVSLRMKTRLILWDRDENTKEKLGVKDIKEQSIFVRDIPLMTERTSFIINGVERVVVNQLHRSPGVIFKEEESTTSGNKLIYTGQIIPDRGSWLYFEYDPKDILYMRINKRRKVPVTIMFRALGYSKQDILKLFYPIQHINIVDNKFLMSFNPNDYSSRLTYDLVDKNGKILLASGKRLSAKKAQNFIDEGLSEVEYPLEVLLDRYLAKPIVDPETGEILFDAMTRIDETKLKKLSEIGVKNFSIANDLAEGVDGSIINAFNADADSLKLLKQTEDIEDENHLSAIRIYKVMRPGEPVTKEAAKVFVNQLFFDPERYDLTKVGRMKMNHKLGLNIPEYITVLTHEDIIESVKYVIKVKNGQGHIDDRDHLGNRRIRSIGELLGNELHNGLIKMQKAIRDKLSTMSGPMNELMPHDLINSKMITSTIMEFFSGGQLSQFMDQTNPLSEVTHKRRLSALGEGGLVKERAGFEVRDVHPTHYGRICPIETPEGQNIGLINTLATYSKVNEHGFIEAPYKVMKEGKVTDEIVYLTATQEEGKKIAAASNKLDKDGQFIDKMVVTRVDGEILHRPVTECNYADLSSHMVVGVAASLIPFLEHDDANRALMGANMQRQAVPLIKHEAPIVGTGVEKLVARDSWECVKARRSGIVEKVDGKHIYVMGDDDGEIYIDYYPLQKNLRTNQNTAFGQKPIVNIGQRVEIGQVIADGPNMDQGELALGVNAMVAFMPWNGYNFEDAIVISERLIRKDAFTSVHIYEKEVEARELKHGVEEITRDIPNVRDDELSHLDESGIIKIGTNVTGGMILVGKVSPKGEVKPTPEERLLRAIFGEKAGHVINKSLYCPPSMEGVVVDVKIFTKKGYDKDARTLELEKEERDYLEREHYDRLLMIDKEEMLRVTKLLTKEPLINDIKIGNTSYKAGDIINGEDLVEVNRFAMNAIIKSFSEEIQSEYNKTKNYFQKEKRLFRDEHEEKLNILEKDDILPNGVVKHVKIYIATKRQLKVGDKMAGRHGNKGIVSTIVPEVDMPYMEDGRGVDVCLNPLGVPSRMNIGQILEMHLGMAGRELGHQITKEFESKQKDFIKNLRAKMIEIADVAQMMNAAKTLGDMSDELLLHHARDWSRGVKFASPIFEGVNAVEFEKLFALAKMDTDGKTVLYNGLTGEKIKERVNVGYMYILKLHHLVDEKIHARSTGPYSLVTQQPVGGKALFGGQRFGEMEVWALEAYGASAVLKEMLTIKSDDVDGRVRAYKAITKGELVPESGIPETLFVLTKELQSLALDVEIFDEVEDNE</sequence>
<feature type="chain" id="PRO_0000237323" description="DNA-directed RNA polymerase subunit beta">
    <location>
        <begin position="1"/>
        <end position="1381"/>
    </location>
</feature>
<reference key="1">
    <citation type="journal article" date="2008" name="Appl. Environ. Microbiol.">
        <title>Genome of the epsilonproteobacterial chemolithoautotroph Sulfurimonas denitrificans.</title>
        <authorList>
            <person name="Sievert S.M."/>
            <person name="Scott K.M."/>
            <person name="Klotz M.G."/>
            <person name="Chain P.S.G."/>
            <person name="Hauser L.J."/>
            <person name="Hemp J."/>
            <person name="Huegler M."/>
            <person name="Land M."/>
            <person name="Lapidus A."/>
            <person name="Larimer F.W."/>
            <person name="Lucas S."/>
            <person name="Malfatti S.A."/>
            <person name="Meyer F."/>
            <person name="Paulsen I.T."/>
            <person name="Ren Q."/>
            <person name="Simon J."/>
            <person name="Bailey K."/>
            <person name="Diaz E."/>
            <person name="Fitzpatrick K.A."/>
            <person name="Glover B."/>
            <person name="Gwatney N."/>
            <person name="Korajkic A."/>
            <person name="Long A."/>
            <person name="Mobberley J.M."/>
            <person name="Pantry S.N."/>
            <person name="Pazder G."/>
            <person name="Peterson S."/>
            <person name="Quintanilla J.D."/>
            <person name="Sprinkle R."/>
            <person name="Stephens J."/>
            <person name="Thomas P."/>
            <person name="Vaughn R."/>
            <person name="Weber M.J."/>
            <person name="Wooten L.L."/>
        </authorList>
    </citation>
    <scope>NUCLEOTIDE SEQUENCE [LARGE SCALE GENOMIC DNA]</scope>
    <source>
        <strain>ATCC 33889 / DSM 1251</strain>
    </source>
</reference>
<organism>
    <name type="scientific">Sulfurimonas denitrificans (strain ATCC 33889 / DSM 1251)</name>
    <name type="common">Thiomicrospira denitrificans (strain ATCC 33889 / DSM 1251)</name>
    <dbReference type="NCBI Taxonomy" id="326298"/>
    <lineage>
        <taxon>Bacteria</taxon>
        <taxon>Pseudomonadati</taxon>
        <taxon>Campylobacterota</taxon>
        <taxon>Epsilonproteobacteria</taxon>
        <taxon>Campylobacterales</taxon>
        <taxon>Sulfurimonadaceae</taxon>
        <taxon>Sulfurimonas</taxon>
    </lineage>
</organism>
<dbReference type="EC" id="2.7.7.6" evidence="1"/>
<dbReference type="EMBL" id="CP000153">
    <property type="protein sequence ID" value="ABB43634.1"/>
    <property type="molecule type" value="Genomic_DNA"/>
</dbReference>
<dbReference type="RefSeq" id="WP_011371988.1">
    <property type="nucleotide sequence ID" value="NC_007575.1"/>
</dbReference>
<dbReference type="SMR" id="Q30TP7"/>
<dbReference type="STRING" id="326298.Suden_0353"/>
<dbReference type="KEGG" id="tdn:Suden_0353"/>
<dbReference type="eggNOG" id="COG0085">
    <property type="taxonomic scope" value="Bacteria"/>
</dbReference>
<dbReference type="HOGENOM" id="CLU_000524_4_0_7"/>
<dbReference type="OrthoDB" id="9803954at2"/>
<dbReference type="Proteomes" id="UP000002714">
    <property type="component" value="Chromosome"/>
</dbReference>
<dbReference type="GO" id="GO:0000428">
    <property type="term" value="C:DNA-directed RNA polymerase complex"/>
    <property type="evidence" value="ECO:0007669"/>
    <property type="project" value="UniProtKB-KW"/>
</dbReference>
<dbReference type="GO" id="GO:0003677">
    <property type="term" value="F:DNA binding"/>
    <property type="evidence" value="ECO:0007669"/>
    <property type="project" value="UniProtKB-UniRule"/>
</dbReference>
<dbReference type="GO" id="GO:0003899">
    <property type="term" value="F:DNA-directed RNA polymerase activity"/>
    <property type="evidence" value="ECO:0007669"/>
    <property type="project" value="UniProtKB-UniRule"/>
</dbReference>
<dbReference type="GO" id="GO:0032549">
    <property type="term" value="F:ribonucleoside binding"/>
    <property type="evidence" value="ECO:0007669"/>
    <property type="project" value="InterPro"/>
</dbReference>
<dbReference type="GO" id="GO:0006351">
    <property type="term" value="P:DNA-templated transcription"/>
    <property type="evidence" value="ECO:0007669"/>
    <property type="project" value="UniProtKB-UniRule"/>
</dbReference>
<dbReference type="CDD" id="cd00653">
    <property type="entry name" value="RNA_pol_B_RPB2"/>
    <property type="match status" value="1"/>
</dbReference>
<dbReference type="Gene3D" id="2.40.50.100">
    <property type="match status" value="1"/>
</dbReference>
<dbReference type="Gene3D" id="2.40.50.150">
    <property type="match status" value="1"/>
</dbReference>
<dbReference type="Gene3D" id="3.90.1100.10">
    <property type="match status" value="2"/>
</dbReference>
<dbReference type="Gene3D" id="2.30.150.10">
    <property type="entry name" value="DNA-directed RNA polymerase, beta subunit, external 1 domain"/>
    <property type="match status" value="1"/>
</dbReference>
<dbReference type="Gene3D" id="2.40.270.10">
    <property type="entry name" value="DNA-directed RNA polymerase, subunit 2, domain 6"/>
    <property type="match status" value="1"/>
</dbReference>
<dbReference type="Gene3D" id="3.90.1800.10">
    <property type="entry name" value="RNA polymerase alpha subunit dimerisation domain"/>
    <property type="match status" value="1"/>
</dbReference>
<dbReference type="HAMAP" id="MF_01321">
    <property type="entry name" value="RNApol_bact_RpoB"/>
    <property type="match status" value="1"/>
</dbReference>
<dbReference type="InterPro" id="IPR042107">
    <property type="entry name" value="DNA-dir_RNA_pol_bsu_ext_1_sf"/>
</dbReference>
<dbReference type="InterPro" id="IPR019462">
    <property type="entry name" value="DNA-dir_RNA_pol_bsu_external_1"/>
</dbReference>
<dbReference type="InterPro" id="IPR015712">
    <property type="entry name" value="DNA-dir_RNA_pol_su2"/>
</dbReference>
<dbReference type="InterPro" id="IPR007120">
    <property type="entry name" value="DNA-dir_RNAP_su2_dom"/>
</dbReference>
<dbReference type="InterPro" id="IPR037033">
    <property type="entry name" value="DNA-dir_RNAP_su2_hyb_sf"/>
</dbReference>
<dbReference type="InterPro" id="IPR010243">
    <property type="entry name" value="RNA_pol_bsu_bac"/>
</dbReference>
<dbReference type="InterPro" id="IPR007121">
    <property type="entry name" value="RNA_pol_bsu_CS"/>
</dbReference>
<dbReference type="InterPro" id="IPR007644">
    <property type="entry name" value="RNA_pol_bsu_protrusion"/>
</dbReference>
<dbReference type="InterPro" id="IPR007642">
    <property type="entry name" value="RNA_pol_Rpb2_2"/>
</dbReference>
<dbReference type="InterPro" id="IPR007645">
    <property type="entry name" value="RNA_pol_Rpb2_3"/>
</dbReference>
<dbReference type="InterPro" id="IPR007641">
    <property type="entry name" value="RNA_pol_Rpb2_7"/>
</dbReference>
<dbReference type="InterPro" id="IPR014724">
    <property type="entry name" value="RNA_pol_RPB2_OB-fold"/>
</dbReference>
<dbReference type="NCBIfam" id="NF001616">
    <property type="entry name" value="PRK00405.1"/>
    <property type="match status" value="1"/>
</dbReference>
<dbReference type="NCBIfam" id="TIGR02013">
    <property type="entry name" value="rpoB"/>
    <property type="match status" value="1"/>
</dbReference>
<dbReference type="PANTHER" id="PTHR20856">
    <property type="entry name" value="DNA-DIRECTED RNA POLYMERASE I SUBUNIT 2"/>
    <property type="match status" value="1"/>
</dbReference>
<dbReference type="Pfam" id="PF04563">
    <property type="entry name" value="RNA_pol_Rpb2_1"/>
    <property type="match status" value="1"/>
</dbReference>
<dbReference type="Pfam" id="PF04561">
    <property type="entry name" value="RNA_pol_Rpb2_2"/>
    <property type="match status" value="2"/>
</dbReference>
<dbReference type="Pfam" id="PF04565">
    <property type="entry name" value="RNA_pol_Rpb2_3"/>
    <property type="match status" value="1"/>
</dbReference>
<dbReference type="Pfam" id="PF10385">
    <property type="entry name" value="RNA_pol_Rpb2_45"/>
    <property type="match status" value="1"/>
</dbReference>
<dbReference type="Pfam" id="PF00562">
    <property type="entry name" value="RNA_pol_Rpb2_6"/>
    <property type="match status" value="1"/>
</dbReference>
<dbReference type="Pfam" id="PF04560">
    <property type="entry name" value="RNA_pol_Rpb2_7"/>
    <property type="match status" value="1"/>
</dbReference>
<dbReference type="SUPFAM" id="SSF64484">
    <property type="entry name" value="beta and beta-prime subunits of DNA dependent RNA-polymerase"/>
    <property type="match status" value="1"/>
</dbReference>
<dbReference type="PROSITE" id="PS01166">
    <property type="entry name" value="RNA_POL_BETA"/>
    <property type="match status" value="1"/>
</dbReference>
<gene>
    <name evidence="1" type="primary">rpoB</name>
    <name type="ordered locus">Suden_0353</name>
</gene>
<comment type="function">
    <text evidence="1">DNA-dependent RNA polymerase catalyzes the transcription of DNA into RNA using the four ribonucleoside triphosphates as substrates.</text>
</comment>
<comment type="catalytic activity">
    <reaction evidence="1">
        <text>RNA(n) + a ribonucleoside 5'-triphosphate = RNA(n+1) + diphosphate</text>
        <dbReference type="Rhea" id="RHEA:21248"/>
        <dbReference type="Rhea" id="RHEA-COMP:14527"/>
        <dbReference type="Rhea" id="RHEA-COMP:17342"/>
        <dbReference type="ChEBI" id="CHEBI:33019"/>
        <dbReference type="ChEBI" id="CHEBI:61557"/>
        <dbReference type="ChEBI" id="CHEBI:140395"/>
        <dbReference type="EC" id="2.7.7.6"/>
    </reaction>
</comment>
<comment type="subunit">
    <text evidence="1">The RNAP catalytic core consists of 2 alpha, 1 beta, 1 beta' and 1 omega subunit. When a sigma factor is associated with the core the holoenzyme is formed, which can initiate transcription.</text>
</comment>
<comment type="similarity">
    <text evidence="1">Belongs to the RNA polymerase beta chain family.</text>
</comment>
<evidence type="ECO:0000255" key="1">
    <source>
        <dbReference type="HAMAP-Rule" id="MF_01321"/>
    </source>
</evidence>
<keyword id="KW-0240">DNA-directed RNA polymerase</keyword>
<keyword id="KW-0548">Nucleotidyltransferase</keyword>
<keyword id="KW-1185">Reference proteome</keyword>
<keyword id="KW-0804">Transcription</keyword>
<keyword id="KW-0808">Transferase</keyword>
<accession>Q30TP7</accession>
<protein>
    <recommendedName>
        <fullName evidence="1">DNA-directed RNA polymerase subunit beta</fullName>
        <shortName evidence="1">RNAP subunit beta</shortName>
        <ecNumber evidence="1">2.7.7.6</ecNumber>
    </recommendedName>
    <alternativeName>
        <fullName evidence="1">RNA polymerase subunit beta</fullName>
    </alternativeName>
    <alternativeName>
        <fullName evidence="1">Transcriptase subunit beta</fullName>
    </alternativeName>
</protein>
<name>RPOB_SULDN</name>
<proteinExistence type="inferred from homology"/>